<comment type="function">
    <text evidence="2 3 4">A probable inner membrane protein. Has been shown not to be a toxin, no effects on growth are seen in LB or minimal medium up to 6 or 21 hours (respectively) after induction of expression (PubMed:23657679). Interacts with cytoskeletal proteins FtsZ and MreB; inhibits FtsZ GTP-dependent polymerization as well as MreB ATP-dependent polymerization (PubMed:22239607). Restores production of prodigiosin antibiotic (Pig) in Serratia strains with deletions of sdhE-ygfX; overexpression of this protein and CptB also restores Pig production to a slightly lesser extent in Serratia (PubMed:22474332).</text>
</comment>
<comment type="subunit">
    <text evidence="2">Interacts with MreB and FtsZ; interaction with the latter requires FtsZ residues 33-49 (PubMed:22239607).</text>
</comment>
<comment type="subcellular location">
    <subcellularLocation>
        <location evidence="2">Cell inner membrane</location>
        <topology evidence="2">Multi-pass membrane protein</topology>
    </subcellularLocation>
</comment>
<comment type="caution">
    <text evidence="2 4">Was originally thought to be the toxic component of a type II toxin-antitoxin (TA) system; overexpression was shown to lead to growth arrest after 5 hours, with initial elongation of cells, followed by swelling (PubMed:22239607). The toxic effects were abrogated by coexpression with antitoxin CptB (now sdhE) (PubMed:22239607). However subsequent studies have been unable to show the toxic effect upon overexpression, nor is the Serratia ortholog a toxin (PubMed:23657679).</text>
</comment>
<keyword id="KW-0997">Cell inner membrane</keyword>
<keyword id="KW-1003">Cell membrane</keyword>
<keyword id="KW-0133">Cell shape</keyword>
<keyword id="KW-0472">Membrane</keyword>
<keyword id="KW-1185">Reference proteome</keyword>
<keyword id="KW-0812">Transmembrane</keyword>
<keyword id="KW-1133">Transmembrane helix</keyword>
<accession>Q46824</accession>
<accession>Q2M9U5</accession>
<protein>
    <recommendedName>
        <fullName>Inner membrane protein YgfX</fullName>
    </recommendedName>
    <alternativeName>
        <fullName evidence="5">Toxin CptA</fullName>
    </alternativeName>
</protein>
<reference key="1">
    <citation type="journal article" date="1997" name="Science">
        <title>The complete genome sequence of Escherichia coli K-12.</title>
        <authorList>
            <person name="Blattner F.R."/>
            <person name="Plunkett G. III"/>
            <person name="Bloch C.A."/>
            <person name="Perna N.T."/>
            <person name="Burland V."/>
            <person name="Riley M."/>
            <person name="Collado-Vides J."/>
            <person name="Glasner J.D."/>
            <person name="Rode C.K."/>
            <person name="Mayhew G.F."/>
            <person name="Gregor J."/>
            <person name="Davis N.W."/>
            <person name="Kirkpatrick H.A."/>
            <person name="Goeden M.A."/>
            <person name="Rose D.J."/>
            <person name="Mau B."/>
            <person name="Shao Y."/>
        </authorList>
    </citation>
    <scope>NUCLEOTIDE SEQUENCE [LARGE SCALE GENOMIC DNA]</scope>
    <source>
        <strain>K12 / MG1655 / ATCC 47076</strain>
    </source>
</reference>
<reference key="2">
    <citation type="journal article" date="2006" name="Mol. Syst. Biol.">
        <title>Highly accurate genome sequences of Escherichia coli K-12 strains MG1655 and W3110.</title>
        <authorList>
            <person name="Hayashi K."/>
            <person name="Morooka N."/>
            <person name="Yamamoto Y."/>
            <person name="Fujita K."/>
            <person name="Isono K."/>
            <person name="Choi S."/>
            <person name="Ohtsubo E."/>
            <person name="Baba T."/>
            <person name="Wanner B.L."/>
            <person name="Mori H."/>
            <person name="Horiuchi T."/>
        </authorList>
    </citation>
    <scope>NUCLEOTIDE SEQUENCE [LARGE SCALE GENOMIC DNA]</scope>
    <source>
        <strain>K12 / W3110 / ATCC 27325 / DSM 5911</strain>
    </source>
</reference>
<reference key="3">
    <citation type="journal article" date="2012" name="FEMS Microbiol. Lett.">
        <title>A novel membrane-bound toxin for cell division, CptA (YgfX), inhibits polymerization of cytoskeleton proteins, FtsZ and MreB, in Escherichia coli.</title>
        <authorList>
            <person name="Masuda H."/>
            <person name="Tan Q."/>
            <person name="Awano N."/>
            <person name="Yamaguchi Y."/>
            <person name="Inouye M."/>
        </authorList>
    </citation>
    <scope>PRELIMINARY (INCORRECT) FUNCTION AS A TOXIN</scope>
    <scope>SUBCELLULAR LOCATION</scope>
    <scope>INTERACTION WITH FTSZ AND MREB</scope>
    <source>
        <strain>B / BL21-DE3</strain>
        <strain>K12 / BW25113</strain>
    </source>
</reference>
<reference key="4">
    <citation type="journal article" date="2012" name="J. Biol. Chem.">
        <title>SdhE is a conserved protein required for flavinylation of succinate dehydrogenase in bacteria.</title>
        <authorList>
            <person name="McNeil M.B."/>
            <person name="Clulow J.S."/>
            <person name="Wilf N.M."/>
            <person name="Salmond G.P."/>
            <person name="Fineran P.C."/>
        </authorList>
    </citation>
    <scope>FUNCTION</scope>
    <source>
        <strain>K12 / BW25113</strain>
    </source>
</reference>
<reference key="5">
    <citation type="journal article" date="2013" name="Microbiology">
        <title>YgfX (CptA) is a multimeric membrane protein that interacts with the succinate dehydrogenase assembly factor SdhE (YgfY).</title>
        <authorList>
            <person name="McNeil M.B."/>
            <person name="Iglesias-Cans M.C."/>
            <person name="Clulow J.S."/>
            <person name="Fineran P.C."/>
        </authorList>
    </citation>
    <scope>NOT A TOXIN-ANTITOXIN SYSTEM</scope>
    <scope>FUNCTION</scope>
    <source>
        <strain>K12 / BW25113</strain>
    </source>
</reference>
<name>YGFX_ECOLI</name>
<gene>
    <name evidence="6" type="primary">ygfX</name>
    <name evidence="5" type="synonym">cptA</name>
    <name type="ordered locus">b2896</name>
    <name type="ordered locus">JW2864</name>
</gene>
<evidence type="ECO:0000255" key="1"/>
<evidence type="ECO:0000269" key="2">
    <source>
    </source>
</evidence>
<evidence type="ECO:0000269" key="3">
    <source>
    </source>
</evidence>
<evidence type="ECO:0000269" key="4">
    <source>
    </source>
</evidence>
<evidence type="ECO:0000303" key="5">
    <source>
    </source>
</evidence>
<evidence type="ECO:0000303" key="6">
    <source>
    </source>
</evidence>
<organism>
    <name type="scientific">Escherichia coli (strain K12)</name>
    <dbReference type="NCBI Taxonomy" id="83333"/>
    <lineage>
        <taxon>Bacteria</taxon>
        <taxon>Pseudomonadati</taxon>
        <taxon>Pseudomonadota</taxon>
        <taxon>Gammaproteobacteria</taxon>
        <taxon>Enterobacterales</taxon>
        <taxon>Enterobacteriaceae</taxon>
        <taxon>Escherichia</taxon>
    </lineage>
</organism>
<feature type="chain" id="PRO_0000169359" description="Inner membrane protein YgfX">
    <location>
        <begin position="1"/>
        <end position="135"/>
    </location>
</feature>
<feature type="topological domain" description="Cytoplasmic" evidence="1">
    <location>
        <begin position="1"/>
        <end position="11"/>
    </location>
</feature>
<feature type="transmembrane region" description="Helical" evidence="1">
    <location>
        <begin position="12"/>
        <end position="32"/>
    </location>
</feature>
<feature type="topological domain" description="Periplasmic" evidence="1">
    <location>
        <begin position="33"/>
        <end position="37"/>
    </location>
</feature>
<feature type="transmembrane region" description="Helical" evidence="1">
    <location>
        <begin position="38"/>
        <end position="54"/>
    </location>
</feature>
<feature type="topological domain" description="Cytoplasmic" evidence="1">
    <location>
        <begin position="55"/>
        <end position="135"/>
    </location>
</feature>
<feature type="region of interest" description="Not required to inhibit FtsZ or MreB polymerization">
    <location>
        <begin position="1"/>
        <end position="96"/>
    </location>
</feature>
<sequence length="135" mass="16064">MVLWQSDLRVSWRAQWLSLLIHGLVAAVILLMPWPLSYTPLWMVLLSLVVFDCVRSQRRINARQGEIRLLMDGRLRWQGQEWSIVKAPWMIKSGMMLRLRSDGGKRQHLWLAADSMDEAEWRDLRRILLQQETQR</sequence>
<dbReference type="EMBL" id="U28375">
    <property type="protein sequence ID" value="AAA83077.1"/>
    <property type="molecule type" value="Genomic_DNA"/>
</dbReference>
<dbReference type="EMBL" id="U00096">
    <property type="protein sequence ID" value="AAC75934.1"/>
    <property type="molecule type" value="Genomic_DNA"/>
</dbReference>
<dbReference type="EMBL" id="AP009048">
    <property type="protein sequence ID" value="BAE76961.1"/>
    <property type="molecule type" value="Genomic_DNA"/>
</dbReference>
<dbReference type="PIR" id="H65073">
    <property type="entry name" value="H65073"/>
</dbReference>
<dbReference type="RefSeq" id="NP_417372.1">
    <property type="nucleotide sequence ID" value="NC_000913.3"/>
</dbReference>
<dbReference type="RefSeq" id="WP_000244777.1">
    <property type="nucleotide sequence ID" value="NZ_STEB01000001.1"/>
</dbReference>
<dbReference type="BioGRID" id="4262341">
    <property type="interactions" value="10"/>
</dbReference>
<dbReference type="FunCoup" id="Q46824">
    <property type="interactions" value="34"/>
</dbReference>
<dbReference type="IntAct" id="Q46824">
    <property type="interactions" value="1"/>
</dbReference>
<dbReference type="STRING" id="511145.b2896"/>
<dbReference type="jPOST" id="Q46824"/>
<dbReference type="PaxDb" id="511145-b2896"/>
<dbReference type="EnsemblBacteria" id="AAC75934">
    <property type="protein sequence ID" value="AAC75934"/>
    <property type="gene ID" value="b2896"/>
</dbReference>
<dbReference type="GeneID" id="947379"/>
<dbReference type="KEGG" id="ecj:JW2864"/>
<dbReference type="KEGG" id="eco:b2896"/>
<dbReference type="KEGG" id="ecoc:C3026_15880"/>
<dbReference type="PATRIC" id="fig|1411691.4.peg.3837"/>
<dbReference type="EchoBASE" id="EB2884"/>
<dbReference type="eggNOG" id="ENOG502ZSY3">
    <property type="taxonomic scope" value="Bacteria"/>
</dbReference>
<dbReference type="HOGENOM" id="CLU_153203_0_0_6"/>
<dbReference type="InParanoid" id="Q46824"/>
<dbReference type="OMA" id="WLASDSM"/>
<dbReference type="OrthoDB" id="7060796at2"/>
<dbReference type="PhylomeDB" id="Q46824"/>
<dbReference type="BioCyc" id="EcoCyc:G7509-MONOMER"/>
<dbReference type="PRO" id="PR:Q46824"/>
<dbReference type="Proteomes" id="UP000000625">
    <property type="component" value="Chromosome"/>
</dbReference>
<dbReference type="GO" id="GO:0005886">
    <property type="term" value="C:plasma membrane"/>
    <property type="evidence" value="ECO:0000314"/>
    <property type="project" value="EcoCyc"/>
</dbReference>
<dbReference type="GO" id="GO:0008360">
    <property type="term" value="P:regulation of cell shape"/>
    <property type="evidence" value="ECO:0007669"/>
    <property type="project" value="UniProtKB-KW"/>
</dbReference>
<dbReference type="InterPro" id="IPR009883">
    <property type="entry name" value="YgfX"/>
</dbReference>
<dbReference type="Pfam" id="PF07254">
    <property type="entry name" value="Cpta_toxin"/>
    <property type="match status" value="1"/>
</dbReference>
<dbReference type="PIRSF" id="PIRSF020653">
    <property type="entry name" value="UCP020653"/>
    <property type="match status" value="1"/>
</dbReference>
<proteinExistence type="evidence at protein level"/>